<comment type="function">
    <text evidence="1">Plays an important role in the de novo pathway of purine nucleotide biosynthesis. Catalyzes the first committed step in the biosynthesis of AMP from IMP.</text>
</comment>
<comment type="catalytic activity">
    <reaction evidence="1">
        <text>IMP + L-aspartate + GTP = N(6)-(1,2-dicarboxyethyl)-AMP + GDP + phosphate + 2 H(+)</text>
        <dbReference type="Rhea" id="RHEA:15753"/>
        <dbReference type="ChEBI" id="CHEBI:15378"/>
        <dbReference type="ChEBI" id="CHEBI:29991"/>
        <dbReference type="ChEBI" id="CHEBI:37565"/>
        <dbReference type="ChEBI" id="CHEBI:43474"/>
        <dbReference type="ChEBI" id="CHEBI:57567"/>
        <dbReference type="ChEBI" id="CHEBI:58053"/>
        <dbReference type="ChEBI" id="CHEBI:58189"/>
        <dbReference type="EC" id="6.3.4.4"/>
    </reaction>
</comment>
<comment type="cofactor">
    <cofactor evidence="1">
        <name>Mg(2+)</name>
        <dbReference type="ChEBI" id="CHEBI:18420"/>
    </cofactor>
    <text evidence="1">Binds 1 Mg(2+) ion per subunit.</text>
</comment>
<comment type="pathway">
    <text evidence="1">Purine metabolism; AMP biosynthesis via de novo pathway; AMP from IMP: step 1/2.</text>
</comment>
<comment type="subunit">
    <text evidence="1">Homodimer.</text>
</comment>
<comment type="subcellular location">
    <subcellularLocation>
        <location evidence="1">Cytoplasm</location>
    </subcellularLocation>
</comment>
<comment type="similarity">
    <text evidence="1">Belongs to the adenylosuccinate synthetase family.</text>
</comment>
<name>PURA2_CUPPJ</name>
<protein>
    <recommendedName>
        <fullName evidence="1">Adenylosuccinate synthetase 2</fullName>
        <shortName evidence="1">AMPSase 2</shortName>
        <shortName evidence="1">AdSS 2</shortName>
        <ecNumber evidence="1">6.3.4.4</ecNumber>
    </recommendedName>
    <alternativeName>
        <fullName evidence="1">IMP--aspartate ligase 2</fullName>
    </alternativeName>
</protein>
<organism>
    <name type="scientific">Cupriavidus pinatubonensis (strain JMP 134 / LMG 1197)</name>
    <name type="common">Cupriavidus necator (strain JMP 134)</name>
    <dbReference type="NCBI Taxonomy" id="264198"/>
    <lineage>
        <taxon>Bacteria</taxon>
        <taxon>Pseudomonadati</taxon>
        <taxon>Pseudomonadota</taxon>
        <taxon>Betaproteobacteria</taxon>
        <taxon>Burkholderiales</taxon>
        <taxon>Burkholderiaceae</taxon>
        <taxon>Cupriavidus</taxon>
    </lineage>
</organism>
<feature type="chain" id="PRO_0000224313" description="Adenylosuccinate synthetase 2">
    <location>
        <begin position="1"/>
        <end position="452"/>
    </location>
</feature>
<feature type="active site" description="Proton acceptor" evidence="1">
    <location>
        <position position="20"/>
    </location>
</feature>
<feature type="active site" description="Proton donor" evidence="1">
    <location>
        <position position="48"/>
    </location>
</feature>
<feature type="binding site" evidence="1">
    <location>
        <begin position="19"/>
        <end position="25"/>
    </location>
    <ligand>
        <name>GTP</name>
        <dbReference type="ChEBI" id="CHEBI:37565"/>
    </ligand>
</feature>
<feature type="binding site" description="in other chain" evidence="1">
    <location>
        <begin position="20"/>
        <end position="23"/>
    </location>
    <ligand>
        <name>IMP</name>
        <dbReference type="ChEBI" id="CHEBI:58053"/>
        <note>ligand shared between dimeric partners</note>
    </ligand>
</feature>
<feature type="binding site" evidence="1">
    <location>
        <position position="20"/>
    </location>
    <ligand>
        <name>Mg(2+)</name>
        <dbReference type="ChEBI" id="CHEBI:18420"/>
    </ligand>
</feature>
<feature type="binding site" description="in other chain" evidence="1">
    <location>
        <begin position="45"/>
        <end position="48"/>
    </location>
    <ligand>
        <name>IMP</name>
        <dbReference type="ChEBI" id="CHEBI:58053"/>
        <note>ligand shared between dimeric partners</note>
    </ligand>
</feature>
<feature type="binding site" evidence="1">
    <location>
        <begin position="47"/>
        <end position="49"/>
    </location>
    <ligand>
        <name>GTP</name>
        <dbReference type="ChEBI" id="CHEBI:37565"/>
    </ligand>
</feature>
<feature type="binding site" evidence="1">
    <location>
        <position position="47"/>
    </location>
    <ligand>
        <name>Mg(2+)</name>
        <dbReference type="ChEBI" id="CHEBI:18420"/>
    </ligand>
</feature>
<feature type="binding site" description="in other chain" evidence="1">
    <location>
        <position position="131"/>
    </location>
    <ligand>
        <name>IMP</name>
        <dbReference type="ChEBI" id="CHEBI:58053"/>
        <note>ligand shared between dimeric partners</note>
    </ligand>
</feature>
<feature type="binding site" evidence="1">
    <location>
        <position position="145"/>
    </location>
    <ligand>
        <name>IMP</name>
        <dbReference type="ChEBI" id="CHEBI:58053"/>
        <note>ligand shared between dimeric partners</note>
    </ligand>
</feature>
<feature type="binding site" description="in other chain" evidence="1">
    <location>
        <position position="223"/>
    </location>
    <ligand>
        <name>IMP</name>
        <dbReference type="ChEBI" id="CHEBI:58053"/>
        <note>ligand shared between dimeric partners</note>
    </ligand>
</feature>
<feature type="binding site" description="in other chain" evidence="1">
    <location>
        <position position="238"/>
    </location>
    <ligand>
        <name>IMP</name>
        <dbReference type="ChEBI" id="CHEBI:58053"/>
        <note>ligand shared between dimeric partners</note>
    </ligand>
</feature>
<feature type="binding site" evidence="1">
    <location>
        <begin position="334"/>
        <end position="340"/>
    </location>
    <ligand>
        <name>substrate</name>
    </ligand>
</feature>
<feature type="binding site" description="in other chain" evidence="1">
    <location>
        <position position="338"/>
    </location>
    <ligand>
        <name>IMP</name>
        <dbReference type="ChEBI" id="CHEBI:58053"/>
        <note>ligand shared between dimeric partners</note>
    </ligand>
</feature>
<feature type="binding site" evidence="1">
    <location>
        <position position="340"/>
    </location>
    <ligand>
        <name>GTP</name>
        <dbReference type="ChEBI" id="CHEBI:37565"/>
    </ligand>
</feature>
<feature type="binding site" evidence="1">
    <location>
        <begin position="366"/>
        <end position="368"/>
    </location>
    <ligand>
        <name>GTP</name>
        <dbReference type="ChEBI" id="CHEBI:37565"/>
    </ligand>
</feature>
<feature type="binding site" evidence="1">
    <location>
        <begin position="437"/>
        <end position="439"/>
    </location>
    <ligand>
        <name>GTP</name>
        <dbReference type="ChEBI" id="CHEBI:37565"/>
    </ligand>
</feature>
<sequence length="452" mass="48972">MDTATKTGYADVLVGLQYGDEGKARVVDHLAAGYDVIARFNGGANAGHTIATSEGILRLRQVPSGVLHPRVSLYIGSGCVIGLRQLASEIEMLAGQGIDLAGRLTISDRCPVVQPAHFLSDRRDGGRIGTTGNGIGPCYADLAARMRGGERSAFQLCDLMRDESRVFEQMMRLAAQRDDEDIAVLIQEMRQAWQVVRPFVTDNPVALLERVEGGARVLFEGAQSVMLDVVQGAQPWVTSSHTLPSYAYVGGDLPCRYHRKTIGVAKAMVSRVGSGPLPTELGAERSEAYCADAGREGRGRADEAARFDPRALLAQGDAFSTGIAIRMLSNEYGTGTGRPRRVGLLDVAQLQLAIRQFGVDEVYLNKCDSLAVFAQTRDRCIPVVVGSRDGNAMHVMRFPAFDESVIPRDDATPLPPQLETLLEWLADVLGRPLRGIGLGPQRAQMRLFKTQP</sequence>
<keyword id="KW-0963">Cytoplasm</keyword>
<keyword id="KW-0342">GTP-binding</keyword>
<keyword id="KW-0436">Ligase</keyword>
<keyword id="KW-0460">Magnesium</keyword>
<keyword id="KW-0479">Metal-binding</keyword>
<keyword id="KW-0547">Nucleotide-binding</keyword>
<keyword id="KW-0658">Purine biosynthesis</keyword>
<evidence type="ECO:0000255" key="1">
    <source>
        <dbReference type="HAMAP-Rule" id="MF_00011"/>
    </source>
</evidence>
<proteinExistence type="inferred from homology"/>
<dbReference type="EC" id="6.3.4.4" evidence="1"/>
<dbReference type="EMBL" id="CP000091">
    <property type="protein sequence ID" value="AAZ64526.1"/>
    <property type="molecule type" value="Genomic_DNA"/>
</dbReference>
<dbReference type="SMR" id="Q46QQ8"/>
<dbReference type="STRING" id="264198.Reut_B5180"/>
<dbReference type="KEGG" id="reu:Reut_B5180"/>
<dbReference type="eggNOG" id="COG0104">
    <property type="taxonomic scope" value="Bacteria"/>
</dbReference>
<dbReference type="HOGENOM" id="CLU_029848_0_2_4"/>
<dbReference type="OrthoDB" id="9807553at2"/>
<dbReference type="UniPathway" id="UPA00075">
    <property type="reaction ID" value="UER00335"/>
</dbReference>
<dbReference type="GO" id="GO:0005737">
    <property type="term" value="C:cytoplasm"/>
    <property type="evidence" value="ECO:0007669"/>
    <property type="project" value="UniProtKB-SubCell"/>
</dbReference>
<dbReference type="GO" id="GO:0004019">
    <property type="term" value="F:adenylosuccinate synthase activity"/>
    <property type="evidence" value="ECO:0007669"/>
    <property type="project" value="UniProtKB-UniRule"/>
</dbReference>
<dbReference type="GO" id="GO:0005525">
    <property type="term" value="F:GTP binding"/>
    <property type="evidence" value="ECO:0007669"/>
    <property type="project" value="UniProtKB-UniRule"/>
</dbReference>
<dbReference type="GO" id="GO:0000287">
    <property type="term" value="F:magnesium ion binding"/>
    <property type="evidence" value="ECO:0007669"/>
    <property type="project" value="UniProtKB-UniRule"/>
</dbReference>
<dbReference type="GO" id="GO:0044208">
    <property type="term" value="P:'de novo' AMP biosynthetic process"/>
    <property type="evidence" value="ECO:0007669"/>
    <property type="project" value="UniProtKB-UniRule"/>
</dbReference>
<dbReference type="GO" id="GO:0046040">
    <property type="term" value="P:IMP metabolic process"/>
    <property type="evidence" value="ECO:0007669"/>
    <property type="project" value="TreeGrafter"/>
</dbReference>
<dbReference type="CDD" id="cd03108">
    <property type="entry name" value="AdSS"/>
    <property type="match status" value="1"/>
</dbReference>
<dbReference type="Gene3D" id="3.40.440.10">
    <property type="entry name" value="Adenylosuccinate Synthetase, subunit A, domain 1"/>
    <property type="match status" value="1"/>
</dbReference>
<dbReference type="Gene3D" id="1.10.300.10">
    <property type="entry name" value="Adenylosuccinate Synthetase, subunit A, domain 2"/>
    <property type="match status" value="1"/>
</dbReference>
<dbReference type="Gene3D" id="3.90.170.10">
    <property type="entry name" value="Adenylosuccinate Synthetase, subunit A, domain 3"/>
    <property type="match status" value="1"/>
</dbReference>
<dbReference type="HAMAP" id="MF_00011">
    <property type="entry name" value="Adenylosucc_synth"/>
    <property type="match status" value="1"/>
</dbReference>
<dbReference type="InterPro" id="IPR042109">
    <property type="entry name" value="Adenylosuccinate_synth_dom1"/>
</dbReference>
<dbReference type="InterPro" id="IPR042110">
    <property type="entry name" value="Adenylosuccinate_synth_dom2"/>
</dbReference>
<dbReference type="InterPro" id="IPR042111">
    <property type="entry name" value="Adenylosuccinate_synth_dom3"/>
</dbReference>
<dbReference type="InterPro" id="IPR001114">
    <property type="entry name" value="Adenylosuccinate_synthetase"/>
</dbReference>
<dbReference type="InterPro" id="IPR027417">
    <property type="entry name" value="P-loop_NTPase"/>
</dbReference>
<dbReference type="PANTHER" id="PTHR11846">
    <property type="entry name" value="ADENYLOSUCCINATE SYNTHETASE"/>
    <property type="match status" value="1"/>
</dbReference>
<dbReference type="PANTHER" id="PTHR11846:SF0">
    <property type="entry name" value="ADENYLOSUCCINATE SYNTHETASE"/>
    <property type="match status" value="1"/>
</dbReference>
<dbReference type="Pfam" id="PF00709">
    <property type="entry name" value="Adenylsucc_synt"/>
    <property type="match status" value="1"/>
</dbReference>
<dbReference type="SMART" id="SM00788">
    <property type="entry name" value="Adenylsucc_synt"/>
    <property type="match status" value="1"/>
</dbReference>
<dbReference type="SUPFAM" id="SSF52540">
    <property type="entry name" value="P-loop containing nucleoside triphosphate hydrolases"/>
    <property type="match status" value="1"/>
</dbReference>
<accession>Q46QQ8</accession>
<gene>
    <name evidence="1" type="primary">purA2</name>
    <name type="ordered locus">Reut_B5180</name>
</gene>
<reference key="1">
    <citation type="journal article" date="2010" name="PLoS ONE">
        <title>The complete multipartite genome sequence of Cupriavidus necator JMP134, a versatile pollutant degrader.</title>
        <authorList>
            <person name="Lykidis A."/>
            <person name="Perez-Pantoja D."/>
            <person name="Ledger T."/>
            <person name="Mavromatis K."/>
            <person name="Anderson I.J."/>
            <person name="Ivanova N.N."/>
            <person name="Hooper S.D."/>
            <person name="Lapidus A."/>
            <person name="Lucas S."/>
            <person name="Gonzalez B."/>
            <person name="Kyrpides N.C."/>
        </authorList>
    </citation>
    <scope>NUCLEOTIDE SEQUENCE [LARGE SCALE GENOMIC DNA]</scope>
    <source>
        <strain>JMP134 / LMG 1197</strain>
    </source>
</reference>